<feature type="chain" id="PRO_0000176466" description="Asparagine--tRNA ligase">
    <location>
        <begin position="1"/>
        <end position="437"/>
    </location>
</feature>
<dbReference type="EC" id="6.1.1.22" evidence="1"/>
<dbReference type="EMBL" id="AP006840">
    <property type="protein sequence ID" value="BAD40567.1"/>
    <property type="molecule type" value="Genomic_DNA"/>
</dbReference>
<dbReference type="RefSeq" id="WP_011195711.1">
    <property type="nucleotide sequence ID" value="NC_006177.1"/>
</dbReference>
<dbReference type="SMR" id="Q67P26"/>
<dbReference type="STRING" id="292459.STH1582"/>
<dbReference type="KEGG" id="sth:STH1582"/>
<dbReference type="eggNOG" id="COG0017">
    <property type="taxonomic scope" value="Bacteria"/>
</dbReference>
<dbReference type="HOGENOM" id="CLU_004553_2_0_9"/>
<dbReference type="OrthoDB" id="9762036at2"/>
<dbReference type="Proteomes" id="UP000000417">
    <property type="component" value="Chromosome"/>
</dbReference>
<dbReference type="GO" id="GO:0005737">
    <property type="term" value="C:cytoplasm"/>
    <property type="evidence" value="ECO:0007669"/>
    <property type="project" value="UniProtKB-SubCell"/>
</dbReference>
<dbReference type="GO" id="GO:0004816">
    <property type="term" value="F:asparagine-tRNA ligase activity"/>
    <property type="evidence" value="ECO:0007669"/>
    <property type="project" value="UniProtKB-UniRule"/>
</dbReference>
<dbReference type="GO" id="GO:0005524">
    <property type="term" value="F:ATP binding"/>
    <property type="evidence" value="ECO:0007669"/>
    <property type="project" value="UniProtKB-UniRule"/>
</dbReference>
<dbReference type="GO" id="GO:0140096">
    <property type="term" value="F:catalytic activity, acting on a protein"/>
    <property type="evidence" value="ECO:0007669"/>
    <property type="project" value="UniProtKB-ARBA"/>
</dbReference>
<dbReference type="GO" id="GO:0003676">
    <property type="term" value="F:nucleic acid binding"/>
    <property type="evidence" value="ECO:0007669"/>
    <property type="project" value="InterPro"/>
</dbReference>
<dbReference type="GO" id="GO:0016740">
    <property type="term" value="F:transferase activity"/>
    <property type="evidence" value="ECO:0007669"/>
    <property type="project" value="UniProtKB-ARBA"/>
</dbReference>
<dbReference type="GO" id="GO:0006421">
    <property type="term" value="P:asparaginyl-tRNA aminoacylation"/>
    <property type="evidence" value="ECO:0007669"/>
    <property type="project" value="UniProtKB-UniRule"/>
</dbReference>
<dbReference type="CDD" id="cd00776">
    <property type="entry name" value="AsxRS_core"/>
    <property type="match status" value="1"/>
</dbReference>
<dbReference type="Gene3D" id="3.30.930.10">
    <property type="entry name" value="Bira Bifunctional Protein, Domain 2"/>
    <property type="match status" value="1"/>
</dbReference>
<dbReference type="Gene3D" id="2.40.50.140">
    <property type="entry name" value="Nucleic acid-binding proteins"/>
    <property type="match status" value="1"/>
</dbReference>
<dbReference type="HAMAP" id="MF_00534">
    <property type="entry name" value="Asn_tRNA_synth"/>
    <property type="match status" value="1"/>
</dbReference>
<dbReference type="InterPro" id="IPR004364">
    <property type="entry name" value="Aa-tRNA-synt_II"/>
</dbReference>
<dbReference type="InterPro" id="IPR006195">
    <property type="entry name" value="aa-tRNA-synth_II"/>
</dbReference>
<dbReference type="InterPro" id="IPR045864">
    <property type="entry name" value="aa-tRNA-synth_II/BPL/LPL"/>
</dbReference>
<dbReference type="InterPro" id="IPR004522">
    <property type="entry name" value="Asn-tRNA-ligase"/>
</dbReference>
<dbReference type="InterPro" id="IPR002312">
    <property type="entry name" value="Asp/Asn-tRNA-synth_IIb"/>
</dbReference>
<dbReference type="InterPro" id="IPR012340">
    <property type="entry name" value="NA-bd_OB-fold"/>
</dbReference>
<dbReference type="InterPro" id="IPR004365">
    <property type="entry name" value="NA-bd_OB_tRNA"/>
</dbReference>
<dbReference type="NCBIfam" id="TIGR00457">
    <property type="entry name" value="asnS"/>
    <property type="match status" value="1"/>
</dbReference>
<dbReference type="NCBIfam" id="NF003037">
    <property type="entry name" value="PRK03932.1"/>
    <property type="match status" value="1"/>
</dbReference>
<dbReference type="PANTHER" id="PTHR22594:SF34">
    <property type="entry name" value="ASPARAGINE--TRNA LIGASE, MITOCHONDRIAL-RELATED"/>
    <property type="match status" value="1"/>
</dbReference>
<dbReference type="PANTHER" id="PTHR22594">
    <property type="entry name" value="ASPARTYL/LYSYL-TRNA SYNTHETASE"/>
    <property type="match status" value="1"/>
</dbReference>
<dbReference type="Pfam" id="PF00152">
    <property type="entry name" value="tRNA-synt_2"/>
    <property type="match status" value="1"/>
</dbReference>
<dbReference type="Pfam" id="PF01336">
    <property type="entry name" value="tRNA_anti-codon"/>
    <property type="match status" value="1"/>
</dbReference>
<dbReference type="PRINTS" id="PR01042">
    <property type="entry name" value="TRNASYNTHASP"/>
</dbReference>
<dbReference type="SUPFAM" id="SSF55681">
    <property type="entry name" value="Class II aaRS and biotin synthetases"/>
    <property type="match status" value="1"/>
</dbReference>
<dbReference type="SUPFAM" id="SSF50249">
    <property type="entry name" value="Nucleic acid-binding proteins"/>
    <property type="match status" value="1"/>
</dbReference>
<dbReference type="PROSITE" id="PS50862">
    <property type="entry name" value="AA_TRNA_LIGASE_II"/>
    <property type="match status" value="1"/>
</dbReference>
<sequence>MKWVTVDRLPQYEGQTVELRGWVQNYRSSGKIQFIIFRDGTGVCQAVLFIKDVPPEVFEAGKRLTQESSIIIRGSVRKDDRAPGGYEIGVQDLEIVQIAEEYPITKKEHGTEFLMDHRHLWIRSNRQVAILRIRNEITMAIHQFLQENGFVLTESPILMGTAAEGGATLFETTYVNDEPAYLSQSGQLHVEATAMALGRVYTFGPTFRAEKSKTRRHLIEFWMVEPEAAYFTHEDNMRLQEEMVTYVVRRVLERRSKELQLIGRDTTLLEKVEPPFPRITYTEAVEMLKKLHKPGDEWEPIEWGEDFGAPHETVLTQQFEKPVFVEKFPVKVKAFYMQPDPENPDVVLGADLLAPEGYGEIIGGSQRIHDPELLKRRFEEHGLDMNTYGWYYDLRRFGSVPHSGFGLGIERTVAWICGLEHVRETIPFPRLLNRLHP</sequence>
<proteinExistence type="inferred from homology"/>
<name>SYN_SYMTH</name>
<evidence type="ECO:0000255" key="1">
    <source>
        <dbReference type="HAMAP-Rule" id="MF_00534"/>
    </source>
</evidence>
<keyword id="KW-0030">Aminoacyl-tRNA synthetase</keyword>
<keyword id="KW-0067">ATP-binding</keyword>
<keyword id="KW-0963">Cytoplasm</keyword>
<keyword id="KW-0436">Ligase</keyword>
<keyword id="KW-0547">Nucleotide-binding</keyword>
<keyword id="KW-0648">Protein biosynthesis</keyword>
<keyword id="KW-1185">Reference proteome</keyword>
<protein>
    <recommendedName>
        <fullName evidence="1">Asparagine--tRNA ligase</fullName>
        <ecNumber evidence="1">6.1.1.22</ecNumber>
    </recommendedName>
    <alternativeName>
        <fullName evidence="1">Asparaginyl-tRNA synthetase</fullName>
        <shortName evidence="1">AsnRS</shortName>
    </alternativeName>
</protein>
<comment type="catalytic activity">
    <reaction evidence="1">
        <text>tRNA(Asn) + L-asparagine + ATP = L-asparaginyl-tRNA(Asn) + AMP + diphosphate + H(+)</text>
        <dbReference type="Rhea" id="RHEA:11180"/>
        <dbReference type="Rhea" id="RHEA-COMP:9659"/>
        <dbReference type="Rhea" id="RHEA-COMP:9674"/>
        <dbReference type="ChEBI" id="CHEBI:15378"/>
        <dbReference type="ChEBI" id="CHEBI:30616"/>
        <dbReference type="ChEBI" id="CHEBI:33019"/>
        <dbReference type="ChEBI" id="CHEBI:58048"/>
        <dbReference type="ChEBI" id="CHEBI:78442"/>
        <dbReference type="ChEBI" id="CHEBI:78515"/>
        <dbReference type="ChEBI" id="CHEBI:456215"/>
        <dbReference type="EC" id="6.1.1.22"/>
    </reaction>
</comment>
<comment type="subunit">
    <text evidence="1">Homodimer.</text>
</comment>
<comment type="subcellular location">
    <subcellularLocation>
        <location evidence="1">Cytoplasm</location>
    </subcellularLocation>
</comment>
<comment type="similarity">
    <text evidence="1">Belongs to the class-II aminoacyl-tRNA synthetase family.</text>
</comment>
<reference key="1">
    <citation type="journal article" date="2004" name="Nucleic Acids Res.">
        <title>Genome sequence of Symbiobacterium thermophilum, an uncultivable bacterium that depends on microbial commensalism.</title>
        <authorList>
            <person name="Ueda K."/>
            <person name="Yamashita A."/>
            <person name="Ishikawa J."/>
            <person name="Shimada M."/>
            <person name="Watsuji T."/>
            <person name="Morimura K."/>
            <person name="Ikeda H."/>
            <person name="Hattori M."/>
            <person name="Beppu T."/>
        </authorList>
    </citation>
    <scope>NUCLEOTIDE SEQUENCE [LARGE SCALE GENOMIC DNA]</scope>
    <source>
        <strain>DSM 24528 / JCM 14929 / IAM 14863 / T</strain>
    </source>
</reference>
<accession>Q67P26</accession>
<gene>
    <name evidence="1" type="primary">asnS</name>
    <name type="ordered locus">STH1582</name>
</gene>
<organism>
    <name type="scientific">Symbiobacterium thermophilum (strain DSM 24528 / JCM 14929 / IAM 14863 / T)</name>
    <dbReference type="NCBI Taxonomy" id="292459"/>
    <lineage>
        <taxon>Bacteria</taxon>
        <taxon>Bacillati</taxon>
        <taxon>Bacillota</taxon>
        <taxon>Clostridia</taxon>
        <taxon>Eubacteriales</taxon>
        <taxon>Symbiobacteriaceae</taxon>
        <taxon>Symbiobacterium</taxon>
    </lineage>
</organism>